<organism>
    <name type="scientific">Chlamydia caviae (strain ATCC VR-813 / DSM 19441 / 03DC25 / GPIC)</name>
    <name type="common">Chlamydophila caviae</name>
    <dbReference type="NCBI Taxonomy" id="227941"/>
    <lineage>
        <taxon>Bacteria</taxon>
        <taxon>Pseudomonadati</taxon>
        <taxon>Chlamydiota</taxon>
        <taxon>Chlamydiia</taxon>
        <taxon>Chlamydiales</taxon>
        <taxon>Chlamydiaceae</taxon>
        <taxon>Chlamydia/Chlamydophila group</taxon>
        <taxon>Chlamydia</taxon>
    </lineage>
</organism>
<evidence type="ECO:0000255" key="1">
    <source>
        <dbReference type="HAMAP-Rule" id="MF_02003"/>
    </source>
</evidence>
<protein>
    <recommendedName>
        <fullName evidence="1">Isoleucine--tRNA ligase</fullName>
        <ecNumber evidence="1">6.1.1.5</ecNumber>
    </recommendedName>
    <alternativeName>
        <fullName evidence="1">Isoleucyl-tRNA synthetase</fullName>
        <shortName evidence="1">IleRS</shortName>
    </alternativeName>
</protein>
<gene>
    <name evidence="1" type="primary">ileS</name>
    <name type="ordered locus">CCA_00664</name>
</gene>
<sequence length="1043" mass="119911">MNTEGESSKESLANREERILDFWKTHDIFQKSLKNREGKTLYSFYDGPPFATGLPHYGHLLAGTIKDVVGRFATMDGYYVPRRFGWDCHGVPVEYEVEKSLDLTTPGAIEDFGVAKFNEECRKIVFRYVDEWERYVHRLGRWVDFSVTWKTMDASFMESVWWVFRSLYDQGLVYEGVKVVPFSTKLGTPLSNFEAGQNYKEVDDPSVVIKFALHGDPASLLVWTTTPWTLVSNMAAAVGPEITYVRVADKVSGEQWILGQGCLSRWFSDPDSYEILESFLGTALVGKSYEPPFSFFEHKRAEGAYKILSGSFVEESEGTGVVHMAPAFGEADFFVCKEHHVPIVCPVDNHGCFTEEIPEYQGQYIKSCDKGIIKSLKNLGKVFYHGTVMHRYPFCWRTDTPLIYKTVNSWFVSVEKIKDKMLRANQKIHWVPEHIKEGRFGKWLDGARDWAISRNRYWGTPIPIWKSKEGEILVIGSVKELEELTGEKISDLHCHFIDQLKVEKEGKTFQRVPYVFDCWFDSGAMPYAQNHYPFENQKETEAGFPADFIAEGLDQTRGWFYTLTVISSALFDQTAFKNAIVNGIVLAEDGNKMSKRLNNYPSPMGIMNTYGADALRLYLLDSVVVKAEDLRFSDKGVESILKQILLPLTNVLSFFKTYTDLYGFDADNYDKEEITYSEIDRWILSNLYTVVGKVRESMSSYNLNTAVNPFVTFIDDLTNWYIRRCRRRFWESEDTPDRRAAFATLYEVLTVFCRVIAPFIPFISEDIYQQIKTEHSAESVHLCDFPHIDLAKVFPDLEQRMSDAREIVGLGHSLRKEHKLKVRQPLANFYIVGPKDRLDELTSFEQLIAEELNVKNIVFYKETPSFVKTTVKPNFRSLGRKVGEKIKDVQRALSNLSQDQIQQLLKQQYLLLNLGFEEITLGIDDVVISWETDPGYVARSSSLFTVVLDCQLTEDLIVEAISRELVNKINTMRRNHKLHVSDRILLQIHSSEDVEKAFLHYEDYICEETLTVQFEFKDSVEGEEWDINGHPTVIALTVASKAN</sequence>
<proteinExistence type="inferred from homology"/>
<comment type="function">
    <text evidence="1">Catalyzes the attachment of isoleucine to tRNA(Ile). As IleRS can inadvertently accommodate and process structurally similar amino acids such as valine, to avoid such errors it has two additional distinct tRNA(Ile)-dependent editing activities. One activity is designated as 'pretransfer' editing and involves the hydrolysis of activated Val-AMP. The other activity is designated 'posttransfer' editing and involves deacylation of mischarged Val-tRNA(Ile).</text>
</comment>
<comment type="catalytic activity">
    <reaction evidence="1">
        <text>tRNA(Ile) + L-isoleucine + ATP = L-isoleucyl-tRNA(Ile) + AMP + diphosphate</text>
        <dbReference type="Rhea" id="RHEA:11060"/>
        <dbReference type="Rhea" id="RHEA-COMP:9666"/>
        <dbReference type="Rhea" id="RHEA-COMP:9695"/>
        <dbReference type="ChEBI" id="CHEBI:30616"/>
        <dbReference type="ChEBI" id="CHEBI:33019"/>
        <dbReference type="ChEBI" id="CHEBI:58045"/>
        <dbReference type="ChEBI" id="CHEBI:78442"/>
        <dbReference type="ChEBI" id="CHEBI:78528"/>
        <dbReference type="ChEBI" id="CHEBI:456215"/>
        <dbReference type="EC" id="6.1.1.5"/>
    </reaction>
</comment>
<comment type="cofactor">
    <cofactor evidence="1">
        <name>Zn(2+)</name>
        <dbReference type="ChEBI" id="CHEBI:29105"/>
    </cofactor>
</comment>
<comment type="subunit">
    <text evidence="1">Monomer.</text>
</comment>
<comment type="subcellular location">
    <subcellularLocation>
        <location evidence="1">Cytoplasm</location>
    </subcellularLocation>
</comment>
<comment type="domain">
    <text evidence="1">IleRS has two distinct active sites: one for aminoacylation and one for editing. The misactivated valine is translocated from the active site to the editing site, which sterically excludes the correctly activated isoleucine. The single editing site contains two valyl binding pockets, one specific for each substrate (Val-AMP or Val-tRNA(Ile)).</text>
</comment>
<comment type="similarity">
    <text evidence="1">Belongs to the class-I aminoacyl-tRNA synthetase family. IleS type 2 subfamily.</text>
</comment>
<reference key="1">
    <citation type="journal article" date="2003" name="Nucleic Acids Res.">
        <title>Genome sequence of Chlamydophila caviae (Chlamydia psittaci GPIC): examining the role of niche-specific genes in the evolution of the Chlamydiaceae.</title>
        <authorList>
            <person name="Read T.D."/>
            <person name="Myers G.S.A."/>
            <person name="Brunham R.C."/>
            <person name="Nelson W.C."/>
            <person name="Paulsen I.T."/>
            <person name="Heidelberg J.F."/>
            <person name="Holtzapple E.K."/>
            <person name="Khouri H.M."/>
            <person name="Federova N.B."/>
            <person name="Carty H.A."/>
            <person name="Umayam L.A."/>
            <person name="Haft D.H."/>
            <person name="Peterson J.D."/>
            <person name="Beanan M.J."/>
            <person name="White O."/>
            <person name="Salzberg S.L."/>
            <person name="Hsia R.-C."/>
            <person name="McClarty G."/>
            <person name="Rank R.G."/>
            <person name="Bavoil P.M."/>
            <person name="Fraser C.M."/>
        </authorList>
    </citation>
    <scope>NUCLEOTIDE SEQUENCE [LARGE SCALE GENOMIC DNA]</scope>
    <source>
        <strain>ATCC VR-813 / DSM 19441 / 03DC25 / GPIC</strain>
    </source>
</reference>
<accession>Q822L8</accession>
<name>SYI_CHLCV</name>
<dbReference type="EC" id="6.1.1.5" evidence="1"/>
<dbReference type="EMBL" id="AE015925">
    <property type="protein sequence ID" value="AAP05406.1"/>
    <property type="molecule type" value="Genomic_DNA"/>
</dbReference>
<dbReference type="RefSeq" id="WP_011006621.1">
    <property type="nucleotide sequence ID" value="NC_003361.3"/>
</dbReference>
<dbReference type="SMR" id="Q822L8"/>
<dbReference type="STRING" id="227941.CCA_00664"/>
<dbReference type="KEGG" id="cca:CCA_00664"/>
<dbReference type="eggNOG" id="COG0060">
    <property type="taxonomic scope" value="Bacteria"/>
</dbReference>
<dbReference type="HOGENOM" id="CLU_001493_1_0_0"/>
<dbReference type="OrthoDB" id="9810365at2"/>
<dbReference type="Proteomes" id="UP000002193">
    <property type="component" value="Chromosome"/>
</dbReference>
<dbReference type="GO" id="GO:0005737">
    <property type="term" value="C:cytoplasm"/>
    <property type="evidence" value="ECO:0007669"/>
    <property type="project" value="UniProtKB-SubCell"/>
</dbReference>
<dbReference type="GO" id="GO:0002161">
    <property type="term" value="F:aminoacyl-tRNA deacylase activity"/>
    <property type="evidence" value="ECO:0007669"/>
    <property type="project" value="InterPro"/>
</dbReference>
<dbReference type="GO" id="GO:0005524">
    <property type="term" value="F:ATP binding"/>
    <property type="evidence" value="ECO:0007669"/>
    <property type="project" value="UniProtKB-UniRule"/>
</dbReference>
<dbReference type="GO" id="GO:0004822">
    <property type="term" value="F:isoleucine-tRNA ligase activity"/>
    <property type="evidence" value="ECO:0007669"/>
    <property type="project" value="UniProtKB-UniRule"/>
</dbReference>
<dbReference type="GO" id="GO:0000049">
    <property type="term" value="F:tRNA binding"/>
    <property type="evidence" value="ECO:0007669"/>
    <property type="project" value="InterPro"/>
</dbReference>
<dbReference type="GO" id="GO:0008270">
    <property type="term" value="F:zinc ion binding"/>
    <property type="evidence" value="ECO:0007669"/>
    <property type="project" value="UniProtKB-UniRule"/>
</dbReference>
<dbReference type="GO" id="GO:0006428">
    <property type="term" value="P:isoleucyl-tRNA aminoacylation"/>
    <property type="evidence" value="ECO:0007669"/>
    <property type="project" value="UniProtKB-UniRule"/>
</dbReference>
<dbReference type="CDD" id="cd07961">
    <property type="entry name" value="Anticodon_Ia_Ile_ABEc"/>
    <property type="match status" value="1"/>
</dbReference>
<dbReference type="CDD" id="cd00818">
    <property type="entry name" value="IleRS_core"/>
    <property type="match status" value="1"/>
</dbReference>
<dbReference type="FunFam" id="3.40.50.620:FF:000241">
    <property type="entry name" value="Isoleucine--tRNA ligase"/>
    <property type="match status" value="1"/>
</dbReference>
<dbReference type="FunFam" id="3.40.50.620:FF:000133">
    <property type="entry name" value="Isoleucyl-tRNA synthetase, cytoplasmic"/>
    <property type="match status" value="1"/>
</dbReference>
<dbReference type="Gene3D" id="3.40.50.620">
    <property type="entry name" value="HUPs"/>
    <property type="match status" value="2"/>
</dbReference>
<dbReference type="Gene3D" id="1.10.730.10">
    <property type="entry name" value="Isoleucyl-tRNA Synthetase, Domain 1"/>
    <property type="match status" value="1"/>
</dbReference>
<dbReference type="HAMAP" id="MF_02003">
    <property type="entry name" value="Ile_tRNA_synth_type2"/>
    <property type="match status" value="1"/>
</dbReference>
<dbReference type="InterPro" id="IPR001412">
    <property type="entry name" value="aa-tRNA-synth_I_CS"/>
</dbReference>
<dbReference type="InterPro" id="IPR002300">
    <property type="entry name" value="aa-tRNA-synth_Ia"/>
</dbReference>
<dbReference type="InterPro" id="IPR033709">
    <property type="entry name" value="Anticodon_Ile_ABEc"/>
</dbReference>
<dbReference type="InterPro" id="IPR002301">
    <property type="entry name" value="Ile-tRNA-ligase"/>
</dbReference>
<dbReference type="InterPro" id="IPR023586">
    <property type="entry name" value="Ile-tRNA-ligase_type2"/>
</dbReference>
<dbReference type="InterPro" id="IPR013155">
    <property type="entry name" value="M/V/L/I-tRNA-synth_anticd-bd"/>
</dbReference>
<dbReference type="InterPro" id="IPR014729">
    <property type="entry name" value="Rossmann-like_a/b/a_fold"/>
</dbReference>
<dbReference type="InterPro" id="IPR009080">
    <property type="entry name" value="tRNAsynth_Ia_anticodon-bd"/>
</dbReference>
<dbReference type="InterPro" id="IPR009008">
    <property type="entry name" value="Val/Leu/Ile-tRNA-synth_edit"/>
</dbReference>
<dbReference type="NCBIfam" id="TIGR00392">
    <property type="entry name" value="ileS"/>
    <property type="match status" value="1"/>
</dbReference>
<dbReference type="PANTHER" id="PTHR42780:SF1">
    <property type="entry name" value="ISOLEUCINE--TRNA LIGASE, CYTOPLASMIC"/>
    <property type="match status" value="1"/>
</dbReference>
<dbReference type="PANTHER" id="PTHR42780">
    <property type="entry name" value="SOLEUCYL-TRNA SYNTHETASE"/>
    <property type="match status" value="1"/>
</dbReference>
<dbReference type="Pfam" id="PF08264">
    <property type="entry name" value="Anticodon_1"/>
    <property type="match status" value="1"/>
</dbReference>
<dbReference type="Pfam" id="PF19302">
    <property type="entry name" value="DUF5915"/>
    <property type="match status" value="1"/>
</dbReference>
<dbReference type="Pfam" id="PF00133">
    <property type="entry name" value="tRNA-synt_1"/>
    <property type="match status" value="1"/>
</dbReference>
<dbReference type="PRINTS" id="PR00984">
    <property type="entry name" value="TRNASYNTHILE"/>
</dbReference>
<dbReference type="SUPFAM" id="SSF47323">
    <property type="entry name" value="Anticodon-binding domain of a subclass of class I aminoacyl-tRNA synthetases"/>
    <property type="match status" value="1"/>
</dbReference>
<dbReference type="SUPFAM" id="SSF52374">
    <property type="entry name" value="Nucleotidylyl transferase"/>
    <property type="match status" value="1"/>
</dbReference>
<dbReference type="SUPFAM" id="SSF50677">
    <property type="entry name" value="ValRS/IleRS/LeuRS editing domain"/>
    <property type="match status" value="1"/>
</dbReference>
<dbReference type="PROSITE" id="PS00178">
    <property type="entry name" value="AA_TRNA_LIGASE_I"/>
    <property type="match status" value="1"/>
</dbReference>
<feature type="chain" id="PRO_0000098531" description="Isoleucine--tRNA ligase">
    <location>
        <begin position="1"/>
        <end position="1043"/>
    </location>
</feature>
<feature type="short sequence motif" description="'HIGH' region">
    <location>
        <begin position="49"/>
        <end position="59"/>
    </location>
</feature>
<feature type="short sequence motif" description="'KMSKS' region">
    <location>
        <begin position="592"/>
        <end position="596"/>
    </location>
</feature>
<feature type="binding site" evidence="1">
    <location>
        <position position="595"/>
    </location>
    <ligand>
        <name>ATP</name>
        <dbReference type="ChEBI" id="CHEBI:30616"/>
    </ligand>
</feature>
<keyword id="KW-0030">Aminoacyl-tRNA synthetase</keyword>
<keyword id="KW-0067">ATP-binding</keyword>
<keyword id="KW-0963">Cytoplasm</keyword>
<keyword id="KW-0436">Ligase</keyword>
<keyword id="KW-0479">Metal-binding</keyword>
<keyword id="KW-0547">Nucleotide-binding</keyword>
<keyword id="KW-0648">Protein biosynthesis</keyword>
<keyword id="KW-0862">Zinc</keyword>